<organism>
    <name type="scientific">Arabidopsis thaliana</name>
    <name type="common">Mouse-ear cress</name>
    <dbReference type="NCBI Taxonomy" id="3702"/>
    <lineage>
        <taxon>Eukaryota</taxon>
        <taxon>Viridiplantae</taxon>
        <taxon>Streptophyta</taxon>
        <taxon>Embryophyta</taxon>
        <taxon>Tracheophyta</taxon>
        <taxon>Spermatophyta</taxon>
        <taxon>Magnoliopsida</taxon>
        <taxon>eudicotyledons</taxon>
        <taxon>Gunneridae</taxon>
        <taxon>Pentapetalae</taxon>
        <taxon>rosids</taxon>
        <taxon>malvids</taxon>
        <taxon>Brassicales</taxon>
        <taxon>Brassicaceae</taxon>
        <taxon>Camelineae</taxon>
        <taxon>Arabidopsis</taxon>
    </lineage>
</organism>
<dbReference type="EMBL" id="AL035527">
    <property type="protein sequence ID" value="CAB36812.1"/>
    <property type="status" value="ALT_SEQ"/>
    <property type="molecule type" value="Genomic_DNA"/>
</dbReference>
<dbReference type="EMBL" id="AL161555">
    <property type="protein sequence ID" value="CAB81275.1"/>
    <property type="status" value="ALT_SEQ"/>
    <property type="molecule type" value="Genomic_DNA"/>
</dbReference>
<dbReference type="EMBL" id="CP002687">
    <property type="protein sequence ID" value="AEE84489.1"/>
    <property type="molecule type" value="Genomic_DNA"/>
</dbReference>
<dbReference type="EMBL" id="AK118142">
    <property type="protein sequence ID" value="BAC42767.1"/>
    <property type="molecule type" value="mRNA"/>
</dbReference>
<dbReference type="PIR" id="T05843">
    <property type="entry name" value="T05843"/>
</dbReference>
<dbReference type="RefSeq" id="NP_193899.2">
    <property type="nucleotide sequence ID" value="NM_118288.4"/>
</dbReference>
<dbReference type="SMR" id="Q8GXN2"/>
<dbReference type="BioGRID" id="13544">
    <property type="interactions" value="25"/>
</dbReference>
<dbReference type="FunCoup" id="Q8GXN2">
    <property type="interactions" value="1569"/>
</dbReference>
<dbReference type="IntAct" id="Q8GXN2">
    <property type="interactions" value="25"/>
</dbReference>
<dbReference type="STRING" id="3702.Q8GXN2"/>
<dbReference type="PaxDb" id="3702-AT4G21680.1"/>
<dbReference type="ProteomicsDB" id="226428"/>
<dbReference type="EnsemblPlants" id="AT4G21680.1">
    <property type="protein sequence ID" value="AT4G21680.1"/>
    <property type="gene ID" value="AT4G21680"/>
</dbReference>
<dbReference type="GeneID" id="828255"/>
<dbReference type="Gramene" id="AT4G21680.1">
    <property type="protein sequence ID" value="AT4G21680.1"/>
    <property type="gene ID" value="AT4G21680"/>
</dbReference>
<dbReference type="KEGG" id="ath:AT4G21680"/>
<dbReference type="Araport" id="AT4G21680"/>
<dbReference type="TAIR" id="AT4G21680">
    <property type="gene designation" value="NPF7.2"/>
</dbReference>
<dbReference type="eggNOG" id="KOG1237">
    <property type="taxonomic scope" value="Eukaryota"/>
</dbReference>
<dbReference type="HOGENOM" id="CLU_009313_4_1_1"/>
<dbReference type="InParanoid" id="Q8GXN2"/>
<dbReference type="OMA" id="CKPHSTV"/>
<dbReference type="PhylomeDB" id="Q8GXN2"/>
<dbReference type="PRO" id="PR:Q8GXN2"/>
<dbReference type="Proteomes" id="UP000006548">
    <property type="component" value="Chromosome 4"/>
</dbReference>
<dbReference type="ExpressionAtlas" id="Q8GXN2">
    <property type="expression patterns" value="baseline and differential"/>
</dbReference>
<dbReference type="GO" id="GO:0005886">
    <property type="term" value="C:plasma membrane"/>
    <property type="evidence" value="ECO:0000314"/>
    <property type="project" value="TAIR"/>
</dbReference>
<dbReference type="GO" id="GO:0015112">
    <property type="term" value="F:nitrate transmembrane transporter activity"/>
    <property type="evidence" value="ECO:0000314"/>
    <property type="project" value="TAIR"/>
</dbReference>
<dbReference type="GO" id="GO:0015293">
    <property type="term" value="F:symporter activity"/>
    <property type="evidence" value="ECO:0007669"/>
    <property type="project" value="UniProtKB-KW"/>
</dbReference>
<dbReference type="GO" id="GO:0042128">
    <property type="term" value="P:nitrate assimilation"/>
    <property type="evidence" value="ECO:0007669"/>
    <property type="project" value="UniProtKB-KW"/>
</dbReference>
<dbReference type="GO" id="GO:0046686">
    <property type="term" value="P:response to cadmium ion"/>
    <property type="evidence" value="ECO:0000270"/>
    <property type="project" value="TAIR"/>
</dbReference>
<dbReference type="GO" id="GO:0010167">
    <property type="term" value="P:response to nitrate"/>
    <property type="evidence" value="ECO:0000270"/>
    <property type="project" value="TAIR"/>
</dbReference>
<dbReference type="CDD" id="cd17419">
    <property type="entry name" value="MFS_NPF7"/>
    <property type="match status" value="1"/>
</dbReference>
<dbReference type="Gene3D" id="1.20.1250.20">
    <property type="entry name" value="MFS general substrate transporter like domains"/>
    <property type="match status" value="1"/>
</dbReference>
<dbReference type="InterPro" id="IPR036259">
    <property type="entry name" value="MFS_trans_sf"/>
</dbReference>
<dbReference type="InterPro" id="IPR000109">
    <property type="entry name" value="POT_fam"/>
</dbReference>
<dbReference type="PANTHER" id="PTHR11654">
    <property type="entry name" value="OLIGOPEPTIDE TRANSPORTER-RELATED"/>
    <property type="match status" value="1"/>
</dbReference>
<dbReference type="Pfam" id="PF00854">
    <property type="entry name" value="PTR2"/>
    <property type="match status" value="1"/>
</dbReference>
<dbReference type="SUPFAM" id="SSF103473">
    <property type="entry name" value="MFS general substrate transporter"/>
    <property type="match status" value="1"/>
</dbReference>
<gene>
    <name type="primary">NPF7.2</name>
    <name type="synonym">NRT1.8</name>
    <name type="ordered locus">At4g21680</name>
    <name type="ORF">F17L22.140</name>
</gene>
<accession>Q8GXN2</accession>
<accession>Q9SVS9</accession>
<feature type="chain" id="PRO_0000399981" description="Protein NRT1/ PTR FAMILY 7.2">
    <location>
        <begin position="1"/>
        <end position="589"/>
    </location>
</feature>
<feature type="transmembrane region" description="Helical" evidence="2">
    <location>
        <begin position="32"/>
        <end position="52"/>
    </location>
</feature>
<feature type="transmembrane region" description="Helical" evidence="2">
    <location>
        <begin position="78"/>
        <end position="98"/>
    </location>
</feature>
<feature type="transmembrane region" description="Helical" evidence="2">
    <location>
        <begin position="105"/>
        <end position="125"/>
    </location>
</feature>
<feature type="transmembrane region" description="Helical" evidence="2">
    <location>
        <begin position="147"/>
        <end position="167"/>
    </location>
</feature>
<feature type="transmembrane region" description="Helical" evidence="2">
    <location>
        <begin position="187"/>
        <end position="207"/>
    </location>
</feature>
<feature type="transmembrane region" description="Helical" evidence="2">
    <location>
        <begin position="217"/>
        <end position="237"/>
    </location>
</feature>
<feature type="transmembrane region" description="Helical" evidence="2">
    <location>
        <begin position="343"/>
        <end position="363"/>
    </location>
</feature>
<feature type="transmembrane region" description="Helical" evidence="2">
    <location>
        <begin position="377"/>
        <end position="397"/>
    </location>
</feature>
<feature type="transmembrane region" description="Helical" evidence="2">
    <location>
        <begin position="423"/>
        <end position="443"/>
    </location>
</feature>
<feature type="transmembrane region" description="Helical" evidence="2">
    <location>
        <begin position="464"/>
        <end position="484"/>
    </location>
</feature>
<feature type="transmembrane region" description="Helical" evidence="2">
    <location>
        <begin position="504"/>
        <end position="524"/>
    </location>
</feature>
<feature type="transmembrane region" description="Helical" evidence="2">
    <location>
        <begin position="548"/>
        <end position="568"/>
    </location>
</feature>
<feature type="modified residue" description="Phosphothreonine" evidence="1">
    <location>
        <position position="102"/>
    </location>
</feature>
<feature type="sequence conflict" description="In Ref. 3; BAC42767." evidence="5" ref="3">
    <original>S</original>
    <variation>N</variation>
    <location>
        <position position="389"/>
    </location>
</feature>
<keyword id="KW-1003">Cell membrane</keyword>
<keyword id="KW-0472">Membrane</keyword>
<keyword id="KW-0534">Nitrate assimilation</keyword>
<keyword id="KW-0597">Phosphoprotein</keyword>
<keyword id="KW-1185">Reference proteome</keyword>
<keyword id="KW-0769">Symport</keyword>
<keyword id="KW-0812">Transmembrane</keyword>
<keyword id="KW-1133">Transmembrane helix</keyword>
<keyword id="KW-0813">Transport</keyword>
<proteinExistence type="evidence at transcript level"/>
<comment type="function">
    <text evidence="4">Low-affinity nitrate transporter. Involved in nitrate removal from xylem sap. Not involved in oligopeptides transport.</text>
</comment>
<comment type="subcellular location">
    <subcellularLocation>
        <location evidence="4">Cell membrane</location>
        <topology evidence="4">Multi-pass membrane protein</topology>
    </subcellularLocation>
</comment>
<comment type="tissue specificity">
    <text evidence="3 4">Expressed in xylem parenchyma cells within the vasculature. Expressed in siliques and flowers. Higher expression in shoots than in roots.</text>
</comment>
<comment type="induction">
    <text evidence="4">Up-regulated by cadmium and nitrate.</text>
</comment>
<comment type="disruption phenotype">
    <text evidence="4">No visible phenotype. Higher nitrate concentration in xylem sap and increased cadmium sensitivity. A greater proportion of nitrate accumulates in shoots under cadmium stress.</text>
</comment>
<comment type="similarity">
    <text evidence="5">Belongs to the major facilitator superfamily. Proton-dependent oligopeptide transporter (POT/PTR) (TC 2.A.17) family.</text>
</comment>
<comment type="sequence caution" evidence="5">
    <conflict type="erroneous gene model prediction">
        <sequence resource="EMBL-CDS" id="CAB36812"/>
    </conflict>
</comment>
<comment type="sequence caution" evidence="5">
    <conflict type="erroneous gene model prediction">
        <sequence resource="EMBL-CDS" id="CAB81275"/>
    </conflict>
</comment>
<evidence type="ECO:0000250" key="1">
    <source>
        <dbReference type="UniProtKB" id="Q05085"/>
    </source>
</evidence>
<evidence type="ECO:0000255" key="2"/>
<evidence type="ECO:0000269" key="3">
    <source>
    </source>
</evidence>
<evidence type="ECO:0000269" key="4">
    <source>
    </source>
</evidence>
<evidence type="ECO:0000305" key="5"/>
<name>PTR47_ARATH</name>
<reference key="1">
    <citation type="journal article" date="1999" name="Nature">
        <title>Sequence and analysis of chromosome 4 of the plant Arabidopsis thaliana.</title>
        <authorList>
            <person name="Mayer K.F.X."/>
            <person name="Schueller C."/>
            <person name="Wambutt R."/>
            <person name="Murphy G."/>
            <person name="Volckaert G."/>
            <person name="Pohl T."/>
            <person name="Duesterhoeft A."/>
            <person name="Stiekema W."/>
            <person name="Entian K.-D."/>
            <person name="Terryn N."/>
            <person name="Harris B."/>
            <person name="Ansorge W."/>
            <person name="Brandt P."/>
            <person name="Grivell L.A."/>
            <person name="Rieger M."/>
            <person name="Weichselgartner M."/>
            <person name="de Simone V."/>
            <person name="Obermaier B."/>
            <person name="Mache R."/>
            <person name="Mueller M."/>
            <person name="Kreis M."/>
            <person name="Delseny M."/>
            <person name="Puigdomenech P."/>
            <person name="Watson M."/>
            <person name="Schmidtheini T."/>
            <person name="Reichert B."/>
            <person name="Portetelle D."/>
            <person name="Perez-Alonso M."/>
            <person name="Boutry M."/>
            <person name="Bancroft I."/>
            <person name="Vos P."/>
            <person name="Hoheisel J."/>
            <person name="Zimmermann W."/>
            <person name="Wedler H."/>
            <person name="Ridley P."/>
            <person name="Langham S.-A."/>
            <person name="McCullagh B."/>
            <person name="Bilham L."/>
            <person name="Robben J."/>
            <person name="van der Schueren J."/>
            <person name="Grymonprez B."/>
            <person name="Chuang Y.-J."/>
            <person name="Vandenbussche F."/>
            <person name="Braeken M."/>
            <person name="Weltjens I."/>
            <person name="Voet M."/>
            <person name="Bastiaens I."/>
            <person name="Aert R."/>
            <person name="Defoor E."/>
            <person name="Weitzenegger T."/>
            <person name="Bothe G."/>
            <person name="Ramsperger U."/>
            <person name="Hilbert H."/>
            <person name="Braun M."/>
            <person name="Holzer E."/>
            <person name="Brandt A."/>
            <person name="Peters S."/>
            <person name="van Staveren M."/>
            <person name="Dirkse W."/>
            <person name="Mooijman P."/>
            <person name="Klein Lankhorst R."/>
            <person name="Rose M."/>
            <person name="Hauf J."/>
            <person name="Koetter P."/>
            <person name="Berneiser S."/>
            <person name="Hempel S."/>
            <person name="Feldpausch M."/>
            <person name="Lamberth S."/>
            <person name="Van den Daele H."/>
            <person name="De Keyser A."/>
            <person name="Buysshaert C."/>
            <person name="Gielen J."/>
            <person name="Villarroel R."/>
            <person name="De Clercq R."/>
            <person name="van Montagu M."/>
            <person name="Rogers J."/>
            <person name="Cronin A."/>
            <person name="Quail M.A."/>
            <person name="Bray-Allen S."/>
            <person name="Clark L."/>
            <person name="Doggett J."/>
            <person name="Hall S."/>
            <person name="Kay M."/>
            <person name="Lennard N."/>
            <person name="McLay K."/>
            <person name="Mayes R."/>
            <person name="Pettett A."/>
            <person name="Rajandream M.A."/>
            <person name="Lyne M."/>
            <person name="Benes V."/>
            <person name="Rechmann S."/>
            <person name="Borkova D."/>
            <person name="Bloecker H."/>
            <person name="Scharfe M."/>
            <person name="Grimm M."/>
            <person name="Loehnert T.-H."/>
            <person name="Dose S."/>
            <person name="de Haan M."/>
            <person name="Maarse A.C."/>
            <person name="Schaefer M."/>
            <person name="Mueller-Auer S."/>
            <person name="Gabel C."/>
            <person name="Fuchs M."/>
            <person name="Fartmann B."/>
            <person name="Granderath K."/>
            <person name="Dauner D."/>
            <person name="Herzl A."/>
            <person name="Neumann S."/>
            <person name="Argiriou A."/>
            <person name="Vitale D."/>
            <person name="Liguori R."/>
            <person name="Piravandi E."/>
            <person name="Massenet O."/>
            <person name="Quigley F."/>
            <person name="Clabauld G."/>
            <person name="Muendlein A."/>
            <person name="Felber R."/>
            <person name="Schnabl S."/>
            <person name="Hiller R."/>
            <person name="Schmidt W."/>
            <person name="Lecharny A."/>
            <person name="Aubourg S."/>
            <person name="Chefdor F."/>
            <person name="Cooke R."/>
            <person name="Berger C."/>
            <person name="Monfort A."/>
            <person name="Casacuberta E."/>
            <person name="Gibbons T."/>
            <person name="Weber N."/>
            <person name="Vandenbol M."/>
            <person name="Bargues M."/>
            <person name="Terol J."/>
            <person name="Torres A."/>
            <person name="Perez-Perez A."/>
            <person name="Purnelle B."/>
            <person name="Bent E."/>
            <person name="Johnson S."/>
            <person name="Tacon D."/>
            <person name="Jesse T."/>
            <person name="Heijnen L."/>
            <person name="Schwarz S."/>
            <person name="Scholler P."/>
            <person name="Heber S."/>
            <person name="Francs P."/>
            <person name="Bielke C."/>
            <person name="Frishman D."/>
            <person name="Haase D."/>
            <person name="Lemcke K."/>
            <person name="Mewes H.-W."/>
            <person name="Stocker S."/>
            <person name="Zaccaria P."/>
            <person name="Bevan M."/>
            <person name="Wilson R.K."/>
            <person name="de la Bastide M."/>
            <person name="Habermann K."/>
            <person name="Parnell L."/>
            <person name="Dedhia N."/>
            <person name="Gnoj L."/>
            <person name="Schutz K."/>
            <person name="Huang E."/>
            <person name="Spiegel L."/>
            <person name="Sekhon M."/>
            <person name="Murray J."/>
            <person name="Sheet P."/>
            <person name="Cordes M."/>
            <person name="Abu-Threideh J."/>
            <person name="Stoneking T."/>
            <person name="Kalicki J."/>
            <person name="Graves T."/>
            <person name="Harmon G."/>
            <person name="Edwards J."/>
            <person name="Latreille P."/>
            <person name="Courtney L."/>
            <person name="Cloud J."/>
            <person name="Abbott A."/>
            <person name="Scott K."/>
            <person name="Johnson D."/>
            <person name="Minx P."/>
            <person name="Bentley D."/>
            <person name="Fulton B."/>
            <person name="Miller N."/>
            <person name="Greco T."/>
            <person name="Kemp K."/>
            <person name="Kramer J."/>
            <person name="Fulton L."/>
            <person name="Mardis E."/>
            <person name="Dante M."/>
            <person name="Pepin K."/>
            <person name="Hillier L.W."/>
            <person name="Nelson J."/>
            <person name="Spieth J."/>
            <person name="Ryan E."/>
            <person name="Andrews S."/>
            <person name="Geisel C."/>
            <person name="Layman D."/>
            <person name="Du H."/>
            <person name="Ali J."/>
            <person name="Berghoff A."/>
            <person name="Jones K."/>
            <person name="Drone K."/>
            <person name="Cotton M."/>
            <person name="Joshu C."/>
            <person name="Antonoiu B."/>
            <person name="Zidanic M."/>
            <person name="Strong C."/>
            <person name="Sun H."/>
            <person name="Lamar B."/>
            <person name="Yordan C."/>
            <person name="Ma P."/>
            <person name="Zhong J."/>
            <person name="Preston R."/>
            <person name="Vil D."/>
            <person name="Shekher M."/>
            <person name="Matero A."/>
            <person name="Shah R."/>
            <person name="Swaby I.K."/>
            <person name="O'Shaughnessy A."/>
            <person name="Rodriguez M."/>
            <person name="Hoffman J."/>
            <person name="Till S."/>
            <person name="Granat S."/>
            <person name="Shohdy N."/>
            <person name="Hasegawa A."/>
            <person name="Hameed A."/>
            <person name="Lodhi M."/>
            <person name="Johnson A."/>
            <person name="Chen E."/>
            <person name="Marra M.A."/>
            <person name="Martienssen R."/>
            <person name="McCombie W.R."/>
        </authorList>
    </citation>
    <scope>NUCLEOTIDE SEQUENCE [LARGE SCALE GENOMIC DNA]</scope>
    <source>
        <strain>cv. Columbia</strain>
    </source>
</reference>
<reference key="2">
    <citation type="journal article" date="2017" name="Plant J.">
        <title>Araport11: a complete reannotation of the Arabidopsis thaliana reference genome.</title>
        <authorList>
            <person name="Cheng C.Y."/>
            <person name="Krishnakumar V."/>
            <person name="Chan A.P."/>
            <person name="Thibaud-Nissen F."/>
            <person name="Schobel S."/>
            <person name="Town C.D."/>
        </authorList>
    </citation>
    <scope>GENOME REANNOTATION</scope>
    <source>
        <strain>cv. Columbia</strain>
    </source>
</reference>
<reference key="3">
    <citation type="journal article" date="2002" name="Science">
        <title>Functional annotation of a full-length Arabidopsis cDNA collection.</title>
        <authorList>
            <person name="Seki M."/>
            <person name="Narusaka M."/>
            <person name="Kamiya A."/>
            <person name="Ishida J."/>
            <person name="Satou M."/>
            <person name="Sakurai T."/>
            <person name="Nakajima M."/>
            <person name="Enju A."/>
            <person name="Akiyama K."/>
            <person name="Oono Y."/>
            <person name="Muramatsu M."/>
            <person name="Hayashizaki Y."/>
            <person name="Kawai J."/>
            <person name="Carninci P."/>
            <person name="Itoh M."/>
            <person name="Ishii Y."/>
            <person name="Arakawa T."/>
            <person name="Shibata K."/>
            <person name="Shinagawa A."/>
            <person name="Shinozaki K."/>
        </authorList>
    </citation>
    <scope>NUCLEOTIDE SEQUENCE [LARGE SCALE MRNA]</scope>
    <source>
        <strain>cv. Columbia</strain>
    </source>
</reference>
<reference key="4">
    <citation type="journal article" date="2007" name="FEBS Lett.">
        <title>Nitrate transporters and peptide transporters.</title>
        <authorList>
            <person name="Tsay Y.F."/>
            <person name="Chiu C.C."/>
            <person name="Tsai C.B."/>
            <person name="Ho C.H."/>
            <person name="Hsu P.K."/>
        </authorList>
    </citation>
    <scope>TISSUE SPECIFICITY</scope>
    <scope>GENE FAMILY</scope>
</reference>
<reference key="5">
    <citation type="journal article" date="2010" name="Plant Cell">
        <title>The Arabidopsis nitrate transporter NRT1.8 functions in nitrate removal from the xylem sap and mediates cadmium tolerance.</title>
        <authorList>
            <person name="Li J.Y."/>
            <person name="Fu Y.L."/>
            <person name="Pike S.M."/>
            <person name="Bao J."/>
            <person name="Tian W."/>
            <person name="Zhang Y."/>
            <person name="Chen C.Z."/>
            <person name="Zhang Y."/>
            <person name="Li H.M."/>
            <person name="Huang J."/>
            <person name="Li L.G."/>
            <person name="Schroeder J.I."/>
            <person name="Gassmann W."/>
            <person name="Gong J.M."/>
        </authorList>
    </citation>
    <scope>FUNCTION</scope>
    <scope>SUBCELLULAR LOCATION</scope>
    <scope>TISSUE SPECIFICITY</scope>
    <scope>INDUCTION BY CADMIUM AND NITRATE</scope>
    <scope>DISRUPTION PHENOTYPE</scope>
    <scope>GENE FAMILY</scope>
</reference>
<reference key="6">
    <citation type="journal article" date="2014" name="Trends Plant Sci.">
        <title>A unified nomenclature of NITRATE TRANSPORTER 1/PEPTIDE TRANSPORTER family members in plants.</title>
        <authorList>
            <person name="Leran S."/>
            <person name="Varala K."/>
            <person name="Boyer J.C."/>
            <person name="Chiurazzi M."/>
            <person name="Crawford N."/>
            <person name="Daniel-Vedele F."/>
            <person name="David L."/>
            <person name="Dickstein R."/>
            <person name="Fernandez E."/>
            <person name="Forde B."/>
            <person name="Gassmann W."/>
            <person name="Geiger D."/>
            <person name="Gojon A."/>
            <person name="Gong J.M."/>
            <person name="Halkier B.A."/>
            <person name="Harris J.M."/>
            <person name="Hedrich R."/>
            <person name="Limami A.M."/>
            <person name="Rentsch D."/>
            <person name="Seo M."/>
            <person name="Tsay Y.F."/>
            <person name="Zhang M."/>
            <person name="Coruzzi G."/>
            <person name="Lacombe B."/>
        </authorList>
    </citation>
    <scope>GENE FAMILY</scope>
    <scope>NOMENCLATURE</scope>
</reference>
<protein>
    <recommendedName>
        <fullName>Protein NRT1/ PTR FAMILY 7.2</fullName>
        <shortName>AtNPF7.2</shortName>
    </recommendedName>
    <alternativeName>
        <fullName>Nitrate transporter 1.8</fullName>
    </alternativeName>
</protein>
<sequence>MDQKVRQFEVCTQDGSVDRHGNPAIRANTGKWLTAILILVNQGLATLAFFGVGVNLVLFLTRVMGQDNAEAANNVSKWTGTVYIFSLLGAFLSDSYWGRYKTCAIFQASFVAGLMMLSLSTGALLLEPSGCGVEDSPCKPHSTFKTVLFYLSVYLIALGYGGYQPNIATFGADQFDAEDSVEGHSKIAFFSYFYLALNLGSLFSNTVLGYFEDQGEWPLGFWASAGSAFAGLVLFLIGTPKYRHFTPRESPWSRFCQVLVAATRKAKIDVHHEELNLYDSETQYTGDKKILHTKGFRFLDRAAIVTPDDEAEKVESGSKYDPWRLCSVTQVEEVKCVLRLLPIWLCTILYSVVFTQMASLFVVQGAAMKTNIKNFRIPASSMSSFDILSVAFFIFAYRRFLDPLFARLNKTERNKGLTELQRMGIGLVIAIMAMISAGIVEIHRLKNKEPESATSISSSSTLSIFWQVPQYMLIGASEVFMYVGQLEFFNSQAPTGLKSFASALCMASISLGNYVSSLLVSIVMKISTTDDVHGWIPENLNKGHLERFYFLLAGLTAADFVVYLICAKWYKYIKSEASFSESVTEEEEV</sequence>